<name>LTOR1_MOUSE</name>
<keyword id="KW-0967">Endosome</keyword>
<keyword id="KW-1017">Isopeptide bond</keyword>
<keyword id="KW-0449">Lipoprotein</keyword>
<keyword id="KW-0458">Lysosome</keyword>
<keyword id="KW-0472">Membrane</keyword>
<keyword id="KW-0519">Myristate</keyword>
<keyword id="KW-0564">Palmitate</keyword>
<keyword id="KW-0597">Phosphoprotein</keyword>
<keyword id="KW-1185">Reference proteome</keyword>
<keyword id="KW-0832">Ubl conjugation</keyword>
<reference key="1">
    <citation type="journal article" date="2005" name="Science">
        <title>The transcriptional landscape of the mammalian genome.</title>
        <authorList>
            <person name="Carninci P."/>
            <person name="Kasukawa T."/>
            <person name="Katayama S."/>
            <person name="Gough J."/>
            <person name="Frith M.C."/>
            <person name="Maeda N."/>
            <person name="Oyama R."/>
            <person name="Ravasi T."/>
            <person name="Lenhard B."/>
            <person name="Wells C."/>
            <person name="Kodzius R."/>
            <person name="Shimokawa K."/>
            <person name="Bajic V.B."/>
            <person name="Brenner S.E."/>
            <person name="Batalov S."/>
            <person name="Forrest A.R."/>
            <person name="Zavolan M."/>
            <person name="Davis M.J."/>
            <person name="Wilming L.G."/>
            <person name="Aidinis V."/>
            <person name="Allen J.E."/>
            <person name="Ambesi-Impiombato A."/>
            <person name="Apweiler R."/>
            <person name="Aturaliya R.N."/>
            <person name="Bailey T.L."/>
            <person name="Bansal M."/>
            <person name="Baxter L."/>
            <person name="Beisel K.W."/>
            <person name="Bersano T."/>
            <person name="Bono H."/>
            <person name="Chalk A.M."/>
            <person name="Chiu K.P."/>
            <person name="Choudhary V."/>
            <person name="Christoffels A."/>
            <person name="Clutterbuck D.R."/>
            <person name="Crowe M.L."/>
            <person name="Dalla E."/>
            <person name="Dalrymple B.P."/>
            <person name="de Bono B."/>
            <person name="Della Gatta G."/>
            <person name="di Bernardo D."/>
            <person name="Down T."/>
            <person name="Engstrom P."/>
            <person name="Fagiolini M."/>
            <person name="Faulkner G."/>
            <person name="Fletcher C.F."/>
            <person name="Fukushima T."/>
            <person name="Furuno M."/>
            <person name="Futaki S."/>
            <person name="Gariboldi M."/>
            <person name="Georgii-Hemming P."/>
            <person name="Gingeras T.R."/>
            <person name="Gojobori T."/>
            <person name="Green R.E."/>
            <person name="Gustincich S."/>
            <person name="Harbers M."/>
            <person name="Hayashi Y."/>
            <person name="Hensch T.K."/>
            <person name="Hirokawa N."/>
            <person name="Hill D."/>
            <person name="Huminiecki L."/>
            <person name="Iacono M."/>
            <person name="Ikeo K."/>
            <person name="Iwama A."/>
            <person name="Ishikawa T."/>
            <person name="Jakt M."/>
            <person name="Kanapin A."/>
            <person name="Katoh M."/>
            <person name="Kawasawa Y."/>
            <person name="Kelso J."/>
            <person name="Kitamura H."/>
            <person name="Kitano H."/>
            <person name="Kollias G."/>
            <person name="Krishnan S.P."/>
            <person name="Kruger A."/>
            <person name="Kummerfeld S.K."/>
            <person name="Kurochkin I.V."/>
            <person name="Lareau L.F."/>
            <person name="Lazarevic D."/>
            <person name="Lipovich L."/>
            <person name="Liu J."/>
            <person name="Liuni S."/>
            <person name="McWilliam S."/>
            <person name="Madan Babu M."/>
            <person name="Madera M."/>
            <person name="Marchionni L."/>
            <person name="Matsuda H."/>
            <person name="Matsuzawa S."/>
            <person name="Miki H."/>
            <person name="Mignone F."/>
            <person name="Miyake S."/>
            <person name="Morris K."/>
            <person name="Mottagui-Tabar S."/>
            <person name="Mulder N."/>
            <person name="Nakano N."/>
            <person name="Nakauchi H."/>
            <person name="Ng P."/>
            <person name="Nilsson R."/>
            <person name="Nishiguchi S."/>
            <person name="Nishikawa S."/>
            <person name="Nori F."/>
            <person name="Ohara O."/>
            <person name="Okazaki Y."/>
            <person name="Orlando V."/>
            <person name="Pang K.C."/>
            <person name="Pavan W.J."/>
            <person name="Pavesi G."/>
            <person name="Pesole G."/>
            <person name="Petrovsky N."/>
            <person name="Piazza S."/>
            <person name="Reed J."/>
            <person name="Reid J.F."/>
            <person name="Ring B.Z."/>
            <person name="Ringwald M."/>
            <person name="Rost B."/>
            <person name="Ruan Y."/>
            <person name="Salzberg S.L."/>
            <person name="Sandelin A."/>
            <person name="Schneider C."/>
            <person name="Schoenbach C."/>
            <person name="Sekiguchi K."/>
            <person name="Semple C.A."/>
            <person name="Seno S."/>
            <person name="Sessa L."/>
            <person name="Sheng Y."/>
            <person name="Shibata Y."/>
            <person name="Shimada H."/>
            <person name="Shimada K."/>
            <person name="Silva D."/>
            <person name="Sinclair B."/>
            <person name="Sperling S."/>
            <person name="Stupka E."/>
            <person name="Sugiura K."/>
            <person name="Sultana R."/>
            <person name="Takenaka Y."/>
            <person name="Taki K."/>
            <person name="Tammoja K."/>
            <person name="Tan S.L."/>
            <person name="Tang S."/>
            <person name="Taylor M.S."/>
            <person name="Tegner J."/>
            <person name="Teichmann S.A."/>
            <person name="Ueda H.R."/>
            <person name="van Nimwegen E."/>
            <person name="Verardo R."/>
            <person name="Wei C.L."/>
            <person name="Yagi K."/>
            <person name="Yamanishi H."/>
            <person name="Zabarovsky E."/>
            <person name="Zhu S."/>
            <person name="Zimmer A."/>
            <person name="Hide W."/>
            <person name="Bult C."/>
            <person name="Grimmond S.M."/>
            <person name="Teasdale R.D."/>
            <person name="Liu E.T."/>
            <person name="Brusic V."/>
            <person name="Quackenbush J."/>
            <person name="Wahlestedt C."/>
            <person name="Mattick J.S."/>
            <person name="Hume D.A."/>
            <person name="Kai C."/>
            <person name="Sasaki D."/>
            <person name="Tomaru Y."/>
            <person name="Fukuda S."/>
            <person name="Kanamori-Katayama M."/>
            <person name="Suzuki M."/>
            <person name="Aoki J."/>
            <person name="Arakawa T."/>
            <person name="Iida J."/>
            <person name="Imamura K."/>
            <person name="Itoh M."/>
            <person name="Kato T."/>
            <person name="Kawaji H."/>
            <person name="Kawagashira N."/>
            <person name="Kawashima T."/>
            <person name="Kojima M."/>
            <person name="Kondo S."/>
            <person name="Konno H."/>
            <person name="Nakano K."/>
            <person name="Ninomiya N."/>
            <person name="Nishio T."/>
            <person name="Okada M."/>
            <person name="Plessy C."/>
            <person name="Shibata K."/>
            <person name="Shiraki T."/>
            <person name="Suzuki S."/>
            <person name="Tagami M."/>
            <person name="Waki K."/>
            <person name="Watahiki A."/>
            <person name="Okamura-Oho Y."/>
            <person name="Suzuki H."/>
            <person name="Kawai J."/>
            <person name="Hayashizaki Y."/>
        </authorList>
    </citation>
    <scope>NUCLEOTIDE SEQUENCE [LARGE SCALE MRNA]</scope>
    <source>
        <strain>C57BL/6J</strain>
        <tissue>Embryo</tissue>
        <tissue>Head</tissue>
        <tissue>Ovary</tissue>
        <tissue>Tongue</tissue>
        <tissue>Uterus</tissue>
    </source>
</reference>
<reference key="2">
    <citation type="journal article" date="2004" name="Genome Res.">
        <title>The status, quality, and expansion of the NIH full-length cDNA project: the Mammalian Gene Collection (MGC).</title>
        <authorList>
            <consortium name="The MGC Project Team"/>
        </authorList>
    </citation>
    <scope>NUCLEOTIDE SEQUENCE [LARGE SCALE MRNA]</scope>
    <source>
        <strain>Czech II</strain>
        <strain>FVB/N</strain>
        <tissue>Lung</tissue>
        <tissue>Mammary tumor</tissue>
    </source>
</reference>
<reference key="3">
    <citation type="journal article" date="2004" name="Mol. Cell. Proteomics">
        <title>Phosphoproteomic analysis of the developing mouse brain.</title>
        <authorList>
            <person name="Ballif B.A."/>
            <person name="Villen J."/>
            <person name="Beausoleil S.A."/>
            <person name="Schwartz D."/>
            <person name="Gygi S.P."/>
        </authorList>
    </citation>
    <scope>IDENTIFICATION BY MASS SPECTROMETRY [LARGE SCALE ANALYSIS]</scope>
    <source>
        <tissue>Embryonic brain</tissue>
    </source>
</reference>
<reference key="4">
    <citation type="journal article" date="2007" name="Proc. Natl. Acad. Sci. U.S.A.">
        <title>Large-scale phosphorylation analysis of mouse liver.</title>
        <authorList>
            <person name="Villen J."/>
            <person name="Beausoleil S.A."/>
            <person name="Gerber S.A."/>
            <person name="Gygi S.P."/>
        </authorList>
    </citation>
    <scope>IDENTIFICATION BY MASS SPECTROMETRY [LARGE SCALE ANALYSIS]</scope>
    <source>
        <tissue>Liver</tissue>
    </source>
</reference>
<reference key="5">
    <citation type="journal article" date="2009" name="EMBO J.">
        <title>The novel lipid raft adaptor p18 controls endosome dynamics by anchoring the MEK-ERK pathway to late endosomes.</title>
        <authorList>
            <person name="Nada S."/>
            <person name="Hondo A."/>
            <person name="Kasai A."/>
            <person name="Koike M."/>
            <person name="Saito K."/>
            <person name="Uchiyama Y."/>
            <person name="Okada M."/>
        </authorList>
    </citation>
    <scope>FUNCTION</scope>
    <scope>SUBCELLULAR LOCATION</scope>
    <scope>DISRUPTION PHENOTYPE</scope>
    <scope>INTERACTION WITH LAMTOR2 AND LAMTOR3</scope>
    <scope>DEVELOPMENTAL STAGE</scope>
</reference>
<reference key="6">
    <citation type="journal article" date="2009" name="Immunity">
        <title>The phagosomal proteome in interferon-gamma-activated macrophages.</title>
        <authorList>
            <person name="Trost M."/>
            <person name="English L."/>
            <person name="Lemieux S."/>
            <person name="Courcelles M."/>
            <person name="Desjardins M."/>
            <person name="Thibault P."/>
        </authorList>
    </citation>
    <scope>IDENTIFICATION BY MASS SPECTROMETRY [LARGE SCALE ANALYSIS]</scope>
</reference>
<reference key="7">
    <citation type="journal article" date="2010" name="Cell">
        <title>A tissue-specific atlas of mouse protein phosphorylation and expression.</title>
        <authorList>
            <person name="Huttlin E.L."/>
            <person name="Jedrychowski M.P."/>
            <person name="Elias J.E."/>
            <person name="Goswami T."/>
            <person name="Rad R."/>
            <person name="Beausoleil S.A."/>
            <person name="Villen J."/>
            <person name="Haas W."/>
            <person name="Sowa M.E."/>
            <person name="Gygi S.P."/>
        </authorList>
    </citation>
    <scope>PHOSPHORYLATION [LARGE SCALE ANALYSIS] AT THR-28</scope>
    <scope>IDENTIFICATION BY MASS SPECTROMETRY [LARGE SCALE ANALYSIS]</scope>
    <source>
        <tissue>Brain</tissue>
        <tissue>Brown adipose tissue</tissue>
        <tissue>Heart</tissue>
        <tissue>Kidney</tissue>
        <tissue>Liver</tissue>
        <tissue>Lung</tissue>
        <tissue>Pancreas</tissue>
        <tissue>Spleen</tissue>
        <tissue>Testis</tissue>
    </source>
</reference>
<reference key="8">
    <citation type="journal article" date="2018" name="Genes Cells">
        <title>TMEM55B contributes to lysosomal homeostasis and amino acid-induced mTORC1 activation.</title>
        <authorList>
            <person name="Hashimoto Y."/>
            <person name="Shirane M."/>
            <person name="Nakayama K.I."/>
        </authorList>
    </citation>
    <scope>INTERACTION WITH PIP4P1</scope>
</reference>
<reference key="9">
    <citation type="journal article" date="2019" name="Cell Stem Cell">
        <title>Lysosomal signaling licenses embryonic stem cell differentiation via inactivation of Tfe3.</title>
        <authorList>
            <person name="Villegas F."/>
            <person name="Lehalle D."/>
            <person name="Mayer D."/>
            <person name="Rittirsch M."/>
            <person name="Stadler M.B."/>
            <person name="Zinner M."/>
            <person name="Olivieri D."/>
            <person name="Vabres P."/>
            <person name="Duplomb-Jego L."/>
            <person name="De Bont E.S.J.M."/>
            <person name="Duffourd Y."/>
            <person name="Duijkers F."/>
            <person name="Avila M."/>
            <person name="Genevieve D."/>
            <person name="Houcinat N."/>
            <person name="Jouan T."/>
            <person name="Kuentz P."/>
            <person name="Lichtenbelt K.D."/>
            <person name="Thauvin-Robinet C."/>
            <person name="St-Onge J."/>
            <person name="Thevenon J."/>
            <person name="van Gassen K.L.I."/>
            <person name="van Haelst M."/>
            <person name="van Koningsbruggen S."/>
            <person name="Hess D."/>
            <person name="Smallwood S.A."/>
            <person name="Riviere J.B."/>
            <person name="Faivre L."/>
            <person name="Betschinger J."/>
        </authorList>
    </citation>
    <scope>FUNCTION</scope>
</reference>
<reference key="10">
    <citation type="journal article" date="2017" name="Nat. Commun.">
        <title>Structural basis for the assembly of the Ragulator-Rag GTPase complex.</title>
        <authorList>
            <person name="Yonehara R."/>
            <person name="Nada S."/>
            <person name="Nakai T."/>
            <person name="Nakai M."/>
            <person name="Kitamura A."/>
            <person name="Ogawa A."/>
            <person name="Nakatsumi H."/>
            <person name="Nakayama K.I."/>
            <person name="Li S."/>
            <person name="Standley D.M."/>
            <person name="Yamashita E."/>
            <person name="Nakagawa A."/>
            <person name="Okada M."/>
        </authorList>
    </citation>
    <scope>FUNCTION</scope>
</reference>
<reference key="11">
    <citation type="journal article" date="2018" name="Elife">
        <title>UBE3A-mediated p18/LAMTOR1 ubiquitination and degradation regulate mTORC1 activity and synaptic plasticity.</title>
        <authorList>
            <person name="Sun J."/>
            <person name="Liu Y."/>
            <person name="Jia Y."/>
            <person name="Hao X."/>
            <person name="Lin W.J."/>
            <person name="Tran J."/>
            <person name="Lynch G."/>
            <person name="Baudry M."/>
            <person name="Bi X."/>
        </authorList>
    </citation>
    <scope>FUNCTION</scope>
    <scope>SUBCELLULAR LOCATION</scope>
    <scope>MYRISTOYLATION AT GLY-2</scope>
    <scope>UBIQUITINATION AT LYS-60; LYS-103 AND LYS-104</scope>
    <scope>MUTAGENESIS OF GLY-2; LYS-60 AND 103-LYS-LYS-104</scope>
</reference>
<dbReference type="EMBL" id="AK009320">
    <property type="protein sequence ID" value="BAB26214.1"/>
    <property type="molecule type" value="mRNA"/>
</dbReference>
<dbReference type="EMBL" id="AK013389">
    <property type="protein sequence ID" value="BAB28825.1"/>
    <property type="molecule type" value="mRNA"/>
</dbReference>
<dbReference type="EMBL" id="AK019947">
    <property type="protein sequence ID" value="BAB31928.1"/>
    <property type="molecule type" value="mRNA"/>
</dbReference>
<dbReference type="EMBL" id="AK144476">
    <property type="protein sequence ID" value="BAE25909.1"/>
    <property type="molecule type" value="mRNA"/>
</dbReference>
<dbReference type="EMBL" id="BC020142">
    <property type="protein sequence ID" value="AAH20142.1"/>
    <property type="molecule type" value="mRNA"/>
</dbReference>
<dbReference type="EMBL" id="BC092062">
    <property type="protein sequence ID" value="AAH92062.1"/>
    <property type="molecule type" value="mRNA"/>
</dbReference>
<dbReference type="EMBL" id="BC096412">
    <property type="protein sequence ID" value="AAH96412.1"/>
    <property type="molecule type" value="mRNA"/>
</dbReference>
<dbReference type="EMBL" id="BC115458">
    <property type="status" value="NOT_ANNOTATED_CDS"/>
    <property type="molecule type" value="mRNA"/>
</dbReference>
<dbReference type="EMBL" id="BC115459">
    <property type="status" value="NOT_ANNOTATED_CDS"/>
    <property type="molecule type" value="mRNA"/>
</dbReference>
<dbReference type="EMBL" id="BC126973">
    <property type="protein sequence ID" value="AAI26974.1"/>
    <property type="molecule type" value="mRNA"/>
</dbReference>
<dbReference type="CCDS" id="CCDS21519.1"/>
<dbReference type="RefSeq" id="NP_079881.2">
    <property type="nucleotide sequence ID" value="NM_025605.3"/>
</dbReference>
<dbReference type="SMR" id="Q9CQ22"/>
<dbReference type="BioGRID" id="211525">
    <property type="interactions" value="17"/>
</dbReference>
<dbReference type="ComplexPortal" id="CPX-4761">
    <property type="entry name" value="Ragulator complex"/>
</dbReference>
<dbReference type="CORUM" id="Q9CQ22"/>
<dbReference type="FunCoup" id="Q9CQ22">
    <property type="interactions" value="1870"/>
</dbReference>
<dbReference type="IntAct" id="Q9CQ22">
    <property type="interactions" value="5"/>
</dbReference>
<dbReference type="MINT" id="Q9CQ22"/>
<dbReference type="STRING" id="10090.ENSMUSP00000033131"/>
<dbReference type="iPTMnet" id="Q9CQ22"/>
<dbReference type="PhosphoSitePlus" id="Q9CQ22"/>
<dbReference type="SwissPalm" id="Q9CQ22"/>
<dbReference type="jPOST" id="Q9CQ22"/>
<dbReference type="PaxDb" id="10090-ENSMUSP00000033131"/>
<dbReference type="PeptideAtlas" id="Q9CQ22"/>
<dbReference type="ProteomicsDB" id="290191"/>
<dbReference type="Pumba" id="Q9CQ22"/>
<dbReference type="Antibodypedia" id="721">
    <property type="antibodies" value="82 antibodies from 25 providers"/>
</dbReference>
<dbReference type="DNASU" id="66508"/>
<dbReference type="Ensembl" id="ENSMUST00000033131.12">
    <property type="protein sequence ID" value="ENSMUSP00000033131.7"/>
    <property type="gene ID" value="ENSMUSG00000030842.13"/>
</dbReference>
<dbReference type="GeneID" id="66508"/>
<dbReference type="KEGG" id="mmu:66508"/>
<dbReference type="UCSC" id="uc009ipw.2">
    <property type="organism name" value="mouse"/>
</dbReference>
<dbReference type="AGR" id="MGI:1913758"/>
<dbReference type="CTD" id="55004"/>
<dbReference type="MGI" id="MGI:1913758">
    <property type="gene designation" value="Lamtor1"/>
</dbReference>
<dbReference type="VEuPathDB" id="HostDB:ENSMUSG00000030842"/>
<dbReference type="eggNOG" id="ENOG502RYX2">
    <property type="taxonomic scope" value="Eukaryota"/>
</dbReference>
<dbReference type="GeneTree" id="ENSGT00390000016789"/>
<dbReference type="HOGENOM" id="CLU_136283_1_0_1"/>
<dbReference type="InParanoid" id="Q9CQ22"/>
<dbReference type="OMA" id="MGCCYSF"/>
<dbReference type="OrthoDB" id="5562028at2759"/>
<dbReference type="PhylomeDB" id="Q9CQ22"/>
<dbReference type="TreeFam" id="TF323788"/>
<dbReference type="Reactome" id="R-MMU-1632852">
    <property type="pathway name" value="Macroautophagy"/>
</dbReference>
<dbReference type="Reactome" id="R-MMU-165159">
    <property type="pathway name" value="MTOR signalling"/>
</dbReference>
<dbReference type="Reactome" id="R-MMU-166208">
    <property type="pathway name" value="mTORC1-mediated signalling"/>
</dbReference>
<dbReference type="Reactome" id="R-MMU-380972">
    <property type="pathway name" value="Energy dependent regulation of mTOR by LKB1-AMPK"/>
</dbReference>
<dbReference type="Reactome" id="R-MMU-5628897">
    <property type="pathway name" value="TP53 Regulates Metabolic Genes"/>
</dbReference>
<dbReference type="Reactome" id="R-MMU-6798695">
    <property type="pathway name" value="Neutrophil degranulation"/>
</dbReference>
<dbReference type="Reactome" id="R-MMU-8943724">
    <property type="pathway name" value="Regulation of PTEN gene transcription"/>
</dbReference>
<dbReference type="Reactome" id="R-MMU-9013149">
    <property type="pathway name" value="RAC1 GTPase cycle"/>
</dbReference>
<dbReference type="Reactome" id="R-MMU-9013404">
    <property type="pathway name" value="RAC2 GTPase cycle"/>
</dbReference>
<dbReference type="Reactome" id="R-MMU-9013406">
    <property type="pathway name" value="RHOQ GTPase cycle"/>
</dbReference>
<dbReference type="Reactome" id="R-MMU-9013407">
    <property type="pathway name" value="RHOH GTPase cycle"/>
</dbReference>
<dbReference type="Reactome" id="R-MMU-9013408">
    <property type="pathway name" value="RHOG GTPase cycle"/>
</dbReference>
<dbReference type="Reactome" id="R-MMU-9013423">
    <property type="pathway name" value="RAC3 GTPase cycle"/>
</dbReference>
<dbReference type="Reactome" id="R-MMU-9639288">
    <property type="pathway name" value="Amino acids regulate mTORC1"/>
</dbReference>
<dbReference type="BioGRID-ORCS" id="66508">
    <property type="hits" value="28 hits in 81 CRISPR screens"/>
</dbReference>
<dbReference type="CD-CODE" id="CE726F99">
    <property type="entry name" value="Postsynaptic density"/>
</dbReference>
<dbReference type="ChiTaRS" id="Lamtor1">
    <property type="organism name" value="mouse"/>
</dbReference>
<dbReference type="PRO" id="PR:Q9CQ22"/>
<dbReference type="Proteomes" id="UP000000589">
    <property type="component" value="Chromosome 7"/>
</dbReference>
<dbReference type="RNAct" id="Q9CQ22">
    <property type="molecule type" value="protein"/>
</dbReference>
<dbReference type="Bgee" id="ENSMUSG00000030842">
    <property type="expression patterns" value="Expressed in white adipose tissue and 64 other cell types or tissues"/>
</dbReference>
<dbReference type="ExpressionAtlas" id="Q9CQ22">
    <property type="expression patterns" value="baseline and differential"/>
</dbReference>
<dbReference type="GO" id="GO:1990877">
    <property type="term" value="C:FNIP-folliculin RagC/D GAP"/>
    <property type="evidence" value="ECO:0007669"/>
    <property type="project" value="Ensembl"/>
</dbReference>
<dbReference type="GO" id="GO:0031902">
    <property type="term" value="C:late endosome membrane"/>
    <property type="evidence" value="ECO:0000250"/>
    <property type="project" value="UniProtKB"/>
</dbReference>
<dbReference type="GO" id="GO:0005765">
    <property type="term" value="C:lysosomal membrane"/>
    <property type="evidence" value="ECO:0000314"/>
    <property type="project" value="UniProtKB"/>
</dbReference>
<dbReference type="GO" id="GO:0005764">
    <property type="term" value="C:lysosome"/>
    <property type="evidence" value="ECO:0000250"/>
    <property type="project" value="UniProtKB"/>
</dbReference>
<dbReference type="GO" id="GO:0045121">
    <property type="term" value="C:membrane raft"/>
    <property type="evidence" value="ECO:0000250"/>
    <property type="project" value="UniProtKB"/>
</dbReference>
<dbReference type="GO" id="GO:0071986">
    <property type="term" value="C:Ragulator complex"/>
    <property type="evidence" value="ECO:0000250"/>
    <property type="project" value="UniProtKB"/>
</dbReference>
<dbReference type="GO" id="GO:0051020">
    <property type="term" value="F:GTPase binding"/>
    <property type="evidence" value="ECO:0007669"/>
    <property type="project" value="Ensembl"/>
</dbReference>
<dbReference type="GO" id="GO:0005085">
    <property type="term" value="F:guanyl-nucleotide exchange factor activity"/>
    <property type="evidence" value="ECO:0007669"/>
    <property type="project" value="Ensembl"/>
</dbReference>
<dbReference type="GO" id="GO:0043495">
    <property type="term" value="F:protein-membrane adaptor activity"/>
    <property type="evidence" value="ECO:0000314"/>
    <property type="project" value="UniProtKB"/>
</dbReference>
<dbReference type="GO" id="GO:0071230">
    <property type="term" value="P:cellular response to amino acid stimulus"/>
    <property type="evidence" value="ECO:0000250"/>
    <property type="project" value="UniProtKB"/>
</dbReference>
<dbReference type="GO" id="GO:0031669">
    <property type="term" value="P:cellular response to nutrient levels"/>
    <property type="evidence" value="ECO:0007669"/>
    <property type="project" value="Ensembl"/>
</dbReference>
<dbReference type="GO" id="GO:0042632">
    <property type="term" value="P:cholesterol homeostasis"/>
    <property type="evidence" value="ECO:0000250"/>
    <property type="project" value="UniProtKB"/>
</dbReference>
<dbReference type="GO" id="GO:0016197">
    <property type="term" value="P:endosomal transport"/>
    <property type="evidence" value="ECO:0000315"/>
    <property type="project" value="UniProtKB"/>
</dbReference>
<dbReference type="GO" id="GO:0007032">
    <property type="term" value="P:endosome organization"/>
    <property type="evidence" value="ECO:0000315"/>
    <property type="project" value="UniProtKB"/>
</dbReference>
<dbReference type="GO" id="GO:0032418">
    <property type="term" value="P:lysosome localization"/>
    <property type="evidence" value="ECO:0000315"/>
    <property type="project" value="UniProtKB"/>
</dbReference>
<dbReference type="GO" id="GO:0007040">
    <property type="term" value="P:lysosome organization"/>
    <property type="evidence" value="ECO:0000315"/>
    <property type="project" value="UniProtKB"/>
</dbReference>
<dbReference type="GO" id="GO:0043410">
    <property type="term" value="P:positive regulation of MAPK cascade"/>
    <property type="evidence" value="ECO:0000315"/>
    <property type="project" value="UniProtKB"/>
</dbReference>
<dbReference type="GO" id="GO:0150032">
    <property type="term" value="P:positive regulation of protein localization to lysosome"/>
    <property type="evidence" value="ECO:0007669"/>
    <property type="project" value="Ensembl"/>
</dbReference>
<dbReference type="GO" id="GO:0032008">
    <property type="term" value="P:positive regulation of TOR signaling"/>
    <property type="evidence" value="ECO:0000250"/>
    <property type="project" value="UniProtKB"/>
</dbReference>
<dbReference type="GO" id="GO:1904263">
    <property type="term" value="P:positive regulation of TORC1 signaling"/>
    <property type="evidence" value="ECO:0000314"/>
    <property type="project" value="UniProtKB"/>
</dbReference>
<dbReference type="GO" id="GO:0008104">
    <property type="term" value="P:protein localization"/>
    <property type="evidence" value="ECO:0000315"/>
    <property type="project" value="UniProtKB"/>
</dbReference>
<dbReference type="GO" id="GO:0072657">
    <property type="term" value="P:protein localization to membrane"/>
    <property type="evidence" value="ECO:0000314"/>
    <property type="project" value="UniProtKB"/>
</dbReference>
<dbReference type="GO" id="GO:0001558">
    <property type="term" value="P:regulation of cell growth"/>
    <property type="evidence" value="ECO:0000250"/>
    <property type="project" value="UniProtKB"/>
</dbReference>
<dbReference type="GO" id="GO:0010874">
    <property type="term" value="P:regulation of cholesterol efflux"/>
    <property type="evidence" value="ECO:0000250"/>
    <property type="project" value="UniProtKB"/>
</dbReference>
<dbReference type="GO" id="GO:0060620">
    <property type="term" value="P:regulation of cholesterol import"/>
    <property type="evidence" value="ECO:0000250"/>
    <property type="project" value="UniProtKB"/>
</dbReference>
<dbReference type="GO" id="GO:0001919">
    <property type="term" value="P:regulation of receptor recycling"/>
    <property type="evidence" value="ECO:0000315"/>
    <property type="project" value="UniProtKB"/>
</dbReference>
<dbReference type="GO" id="GO:0038202">
    <property type="term" value="P:TORC1 signaling"/>
    <property type="evidence" value="ECO:0000303"/>
    <property type="project" value="ComplexPortal"/>
</dbReference>
<dbReference type="InterPro" id="IPR028209">
    <property type="entry name" value="LAMTOR1/MEH1"/>
</dbReference>
<dbReference type="PANTHER" id="PTHR13401">
    <property type="entry name" value="RAGULATOR COMPLEX PROTEIN LAMTOR1"/>
    <property type="match status" value="1"/>
</dbReference>
<dbReference type="PANTHER" id="PTHR13401:SF2">
    <property type="entry name" value="RAGULATOR COMPLEX PROTEIN LAMTOR1"/>
    <property type="match status" value="1"/>
</dbReference>
<dbReference type="Pfam" id="PF15454">
    <property type="entry name" value="LAMTOR"/>
    <property type="match status" value="1"/>
</dbReference>
<dbReference type="SMART" id="SM01262">
    <property type="entry name" value="LAMTOR"/>
    <property type="match status" value="1"/>
</dbReference>
<proteinExistence type="evidence at protein level"/>
<comment type="function">
    <text evidence="1 4 5 7 8">Key component of the Ragulator complex, a multiprotein complex involved in amino acid sensing and activation of mTORC1, a signaling complex promoting cell growth in response to growth factors, energy levels, and amino acids (PubMed:19177150, PubMed:29158492, PubMed:30020076). Activated by amino acids through a mechanism involving the lysosomal V-ATPase, the Ragulator plays a dual role for the small GTPases Rag (RagA/RRAGA, RagB/RRAGB, RagC/RRAGC and/or RagD/RRAGD): it (1) acts as a guanine nucleotide exchange factor (GEF), activating the small GTPases Rag and (2) mediates recruitment of Rag GTPases to the lysosome membrane (PubMed:19177150, PubMed:29158492, PubMed:30020076). Activated Ragulator and Rag GTPases function as a scaffold recruiting mTORC1 to lysosomes where it is in turn activated (PubMed:19177150). LAMTOR1 is directly responsible for anchoring the Ragulator complex to the lysosomal membrane (PubMed:19177150). LAMTOR1 wraps around the other subunits of the Ragulator complex to hold them in place and interacts with the Rag GTPases, thereby playing a key role in the recruitment of the mTORC1 complex to lysosomes (By similarity). Also involved in the control of embryonic stem cells differentiation via non-canonical RagC/RRAGC and RagD/RRAGD activation: together with FLCN, it is necessary to recruit and activate RagC/RRAGC and RagD/RRAGD at the lysosomes, and to induce exit of embryonic stem cells from pluripotency via non-canonical, mTOR-independent TFE3 inactivation (PubMed:30595499). Also required for late endosomes/lysosomes biogenesis it may regulate both the recycling of receptors through endosomes and the MAPK signaling pathway through recruitment of some of its components to late endosomes (By similarity). May be involved in cholesterol homeostasis regulating LDL uptake and cholesterol release from late endosomes/lysosomes (By similarity). May also play a role in RHOA activation (By similarity).</text>
</comment>
<comment type="subunit">
    <text evidence="1 4 6">Part of the Ragulator complex composed of LAMTOR1, LAMTOR2, LAMTOR3, LAMTOR4 and LAMTOR5 (By similarity). LAMTOR4 and LAMTOR5 form a heterodimer that interacts, through LAMTOR1, with a LAMTOR2, LAMTOR3 heterodimer (By similarity). Interacts with LAMTOR2 and LAMTOR3; the interaction is direct (PubMed:19177150). The Ragulator complex interacts with both the mTORC1 complex and heterodimers constituted of the Rag GTPases RagA/RRAGA, RagB/RRAGB, RagC/RRAGC and RagD/RRAGD; regulated by amino acid availability (By similarity). The Ragulator complex interacts with SLC38A9; the probable amino acid sensor (By similarity). Component of the lysosomal folliculin complex (LFC), composed of FLCN, FNIP1 (or FNIP2), RagA/RRAGA or RagB/RRAGB GDP-bound, RagC/RRAGC or RagD/RRAGD GTP-bound, and Ragulator (By similarity). Associates with the lysosomal V-ATPase complex; interaction promotes the guanine nucleotide exchange factor (GEF) of the Ragulator complex (By similarity). Interacts with MMP14 (By similarity). Interacts with CDKN1B; prevents the interaction of CDKN1B with RHOA leaving RHOA in a form accessible to activation by ARHGEF2 (By similarity). Interacts with PIP4P1 (PubMed:29644770).</text>
</comment>
<comment type="subcellular location">
    <subcellularLocation>
        <location evidence="7">Lysosome membrane</location>
        <topology evidence="7">Lipid-anchor</topology>
        <orientation evidence="7">Cytoplasmic side</orientation>
    </subcellularLocation>
    <subcellularLocation>
        <location evidence="4">Late endosome membrane</location>
        <topology evidence="1">Lipid-anchor</topology>
        <orientation evidence="1">Cytoplasmic side</orientation>
    </subcellularLocation>
    <text evidence="7">Recruited to lysosome and endosome membranes through N-terminal myristoylation and palmitoylation.</text>
</comment>
<comment type="developmental stage">
    <text evidence="4">At 6.5 dpc expressed throughout the embryo with relative abundance in the visceral endoderm.</text>
</comment>
<comment type="PTM">
    <text evidence="1">N-terminal myristoylation and palmitoylation mediates its recruitment to lysosome membranes, thereby promoting localization of the Ragulator complex to lysosomes. N-myristoylation by NMT1 is required for palmitoylation at Cys-3 and Cys-4.</text>
</comment>
<comment type="PTM">
    <text evidence="1 7">Ubiquitinated at Lys-60, Lys-103 and Lys-104 by UBE3A in neurons, promoting its degradation by the proteasome, thereby limiting mTORC1 signaling and activity-dependent synaptic remodeling (PubMed:30020076). Ubiquitination at Lys-20 impairs the association with the lysosomal V-ATPase complex. Deubiquitination at Lys-20 by USP32 promotes the association with the lysosomal V-ATPase complex and subsequent activation of the mTORC1 complex (By similarity).</text>
</comment>
<comment type="disruption phenotype">
    <text evidence="4">Embryos die at egg cylinder stage due to growth retardation, associated with altered endosomes and lysosomes organizations and impaired membrane protein transport in the visceral endoderm.</text>
</comment>
<comment type="similarity">
    <text evidence="11">Belongs to the LAMTOR1 family.</text>
</comment>
<sequence length="161" mass="17749">MGCCYSSENEDSDQDREERKLLLDPSSTPTKALNGAEPNYHSLPSARTDEQALLSSILAKTASNIIDVSAADSQGMEQHEYMDRARQYSTRLAVLSSSLTHWKKLPPLPSLTSQPHQVLASEPIPFSDLQQVSRIAAYAYSALSQIRVDAKEELVVQFGIP</sequence>
<feature type="initiator methionine" description="Removed" evidence="7">
    <location>
        <position position="1"/>
    </location>
</feature>
<feature type="chain" id="PRO_0000274293" description="Ragulator complex protein LAMTOR1">
    <location>
        <begin position="2"/>
        <end position="161"/>
    </location>
</feature>
<feature type="region of interest" description="Disordered" evidence="3">
    <location>
        <begin position="1"/>
        <end position="43"/>
    </location>
</feature>
<feature type="region of interest" description="Interaction with LAMTOR2 and LAMTOR3" evidence="2">
    <location>
        <begin position="121"/>
        <end position="161"/>
    </location>
</feature>
<feature type="modified residue" description="Phosphoserine" evidence="1">
    <location>
        <position position="27"/>
    </location>
</feature>
<feature type="modified residue" description="Phosphothreonine" evidence="13">
    <location>
        <position position="28"/>
    </location>
</feature>
<feature type="modified residue" description="Phosphoserine" evidence="1">
    <location>
        <position position="42"/>
    </location>
</feature>
<feature type="modified residue" description="Phosphoserine" evidence="1">
    <location>
        <position position="56"/>
    </location>
</feature>
<feature type="modified residue" description="Phosphoserine" evidence="1">
    <location>
        <position position="98"/>
    </location>
</feature>
<feature type="modified residue" description="Phosphoserine" evidence="1">
    <location>
        <position position="141"/>
    </location>
</feature>
<feature type="lipid moiety-binding region" description="N-myristoyl glycine" evidence="7">
    <location>
        <position position="2"/>
    </location>
</feature>
<feature type="lipid moiety-binding region" description="S-palmitoyl cysteine" evidence="1">
    <location>
        <position position="3"/>
    </location>
</feature>
<feature type="lipid moiety-binding region" description="S-palmitoyl cysteine" evidence="1">
    <location>
        <position position="4"/>
    </location>
</feature>
<feature type="cross-link" description="Glycyl lysine isopeptide (Lys-Gly) (interchain with G-Cter in ubiquitin)" evidence="1">
    <location>
        <position position="20"/>
    </location>
</feature>
<feature type="cross-link" description="Glycyl lysine isopeptide (Lys-Gly) (interchain with G-Cter in ubiquitin)" evidence="1">
    <location>
        <position position="31"/>
    </location>
</feature>
<feature type="cross-link" description="Glycyl lysine isopeptide (Lys-Gly) (interchain with G-Cter in ubiquitin)" evidence="7">
    <location>
        <position position="60"/>
    </location>
</feature>
<feature type="cross-link" description="Glycyl lysine isopeptide (Lys-Gly) (interchain with G-Cter in ubiquitin)" evidence="7">
    <location>
        <position position="103"/>
    </location>
</feature>
<feature type="cross-link" description="Glycyl lysine isopeptide (Lys-Gly) (interchain with G-Cter in ubiquitin)" evidence="7">
    <location>
        <position position="104"/>
    </location>
</feature>
<feature type="mutagenesis site" description="Abolished N-myristoylation and subsequent localization to lysosomes." evidence="7">
    <original>G</original>
    <variation>A</variation>
    <location>
        <position position="2"/>
    </location>
</feature>
<feature type="mutagenesis site" description="Reduces ubiquitination by UBE3A." evidence="7">
    <original>K</original>
    <variation>R</variation>
    <location>
        <position position="60"/>
    </location>
</feature>
<feature type="mutagenesis site" description="Reduces ubiquitination by UBE3A." evidence="7">
    <original>KK</original>
    <variation>RR</variation>
    <location>
        <begin position="103"/>
        <end position="104"/>
    </location>
</feature>
<feature type="sequence conflict" description="In Ref. 1; BAB28825." evidence="11" ref="1">
    <original>M</original>
    <variation>I</variation>
    <location>
        <position position="82"/>
    </location>
</feature>
<gene>
    <name evidence="10 12" type="primary">Lamtor1</name>
</gene>
<evidence type="ECO:0000250" key="1">
    <source>
        <dbReference type="UniProtKB" id="Q6IAA8"/>
    </source>
</evidence>
<evidence type="ECO:0000250" key="2">
    <source>
        <dbReference type="UniProtKB" id="Q6P791"/>
    </source>
</evidence>
<evidence type="ECO:0000256" key="3">
    <source>
        <dbReference type="SAM" id="MobiDB-lite"/>
    </source>
</evidence>
<evidence type="ECO:0000269" key="4">
    <source>
    </source>
</evidence>
<evidence type="ECO:0000269" key="5">
    <source>
    </source>
</evidence>
<evidence type="ECO:0000269" key="6">
    <source>
    </source>
</evidence>
<evidence type="ECO:0000269" key="7">
    <source>
    </source>
</evidence>
<evidence type="ECO:0000269" key="8">
    <source>
    </source>
</evidence>
<evidence type="ECO:0000303" key="9">
    <source>
    </source>
</evidence>
<evidence type="ECO:0000303" key="10">
    <source>
    </source>
</evidence>
<evidence type="ECO:0000305" key="11"/>
<evidence type="ECO:0000312" key="12">
    <source>
        <dbReference type="MGI" id="MGI:1913758"/>
    </source>
</evidence>
<evidence type="ECO:0007744" key="13">
    <source>
    </source>
</evidence>
<organism>
    <name type="scientific">Mus musculus</name>
    <name type="common">Mouse</name>
    <dbReference type="NCBI Taxonomy" id="10090"/>
    <lineage>
        <taxon>Eukaryota</taxon>
        <taxon>Metazoa</taxon>
        <taxon>Chordata</taxon>
        <taxon>Craniata</taxon>
        <taxon>Vertebrata</taxon>
        <taxon>Euteleostomi</taxon>
        <taxon>Mammalia</taxon>
        <taxon>Eutheria</taxon>
        <taxon>Euarchontoglires</taxon>
        <taxon>Glires</taxon>
        <taxon>Rodentia</taxon>
        <taxon>Myomorpha</taxon>
        <taxon>Muroidea</taxon>
        <taxon>Muridae</taxon>
        <taxon>Murinae</taxon>
        <taxon>Mus</taxon>
        <taxon>Mus</taxon>
    </lineage>
</organism>
<protein>
    <recommendedName>
        <fullName>Ragulator complex protein LAMTOR1</fullName>
    </recommendedName>
    <alternativeName>
        <fullName>Late endosomal/lysosomal adaptor and MAPK and MTOR activator 1</fullName>
    </alternativeName>
    <alternativeName>
        <fullName evidence="9">Lipid raft adaptor protein p18</fullName>
    </alternativeName>
</protein>
<accession>Q9CQ22</accession>
<accession>Q9CYS0</accession>